<organism>
    <name type="scientific">Staphylococcus aureus (strain JH9)</name>
    <dbReference type="NCBI Taxonomy" id="359786"/>
    <lineage>
        <taxon>Bacteria</taxon>
        <taxon>Bacillati</taxon>
        <taxon>Bacillota</taxon>
        <taxon>Bacilli</taxon>
        <taxon>Bacillales</taxon>
        <taxon>Staphylococcaceae</taxon>
        <taxon>Staphylococcus</taxon>
    </lineage>
</organism>
<keyword id="KW-0028">Amino-acid biosynthesis</keyword>
<keyword id="KW-0963">Cytoplasm</keyword>
<keyword id="KW-0368">Histidine biosynthesis</keyword>
<keyword id="KW-0413">Isomerase</keyword>
<gene>
    <name evidence="1" type="primary">hisA</name>
    <name type="ordered locus">SaurJH9_2698</name>
</gene>
<name>HIS4_STAA9</name>
<dbReference type="EC" id="5.3.1.16" evidence="1"/>
<dbReference type="EMBL" id="CP000703">
    <property type="protein sequence ID" value="ABQ50474.1"/>
    <property type="molecule type" value="Genomic_DNA"/>
</dbReference>
<dbReference type="RefSeq" id="WP_000571742.1">
    <property type="nucleotide sequence ID" value="NC_009487.1"/>
</dbReference>
<dbReference type="SMR" id="A5IWA1"/>
<dbReference type="KEGG" id="saj:SaurJH9_2698"/>
<dbReference type="HOGENOM" id="CLU_048577_1_2_9"/>
<dbReference type="UniPathway" id="UPA00031">
    <property type="reaction ID" value="UER00009"/>
</dbReference>
<dbReference type="GO" id="GO:0005737">
    <property type="term" value="C:cytoplasm"/>
    <property type="evidence" value="ECO:0007669"/>
    <property type="project" value="UniProtKB-SubCell"/>
</dbReference>
<dbReference type="GO" id="GO:0003949">
    <property type="term" value="F:1-(5-phosphoribosyl)-5-[(5-phosphoribosylamino)methylideneamino]imidazole-4-carboxamide isomerase activity"/>
    <property type="evidence" value="ECO:0007669"/>
    <property type="project" value="UniProtKB-UniRule"/>
</dbReference>
<dbReference type="GO" id="GO:0000105">
    <property type="term" value="P:L-histidine biosynthetic process"/>
    <property type="evidence" value="ECO:0007669"/>
    <property type="project" value="UniProtKB-UniRule"/>
</dbReference>
<dbReference type="GO" id="GO:0000162">
    <property type="term" value="P:L-tryptophan biosynthetic process"/>
    <property type="evidence" value="ECO:0007669"/>
    <property type="project" value="TreeGrafter"/>
</dbReference>
<dbReference type="CDD" id="cd04732">
    <property type="entry name" value="HisA"/>
    <property type="match status" value="1"/>
</dbReference>
<dbReference type="FunFam" id="3.20.20.70:FF:000213">
    <property type="entry name" value="1-(5-phosphoribosyl)-5-[(5-phosphoribosylamino)methylideneamino] imidazole-4-carboxamide isomerase"/>
    <property type="match status" value="1"/>
</dbReference>
<dbReference type="Gene3D" id="3.20.20.70">
    <property type="entry name" value="Aldolase class I"/>
    <property type="match status" value="1"/>
</dbReference>
<dbReference type="HAMAP" id="MF_01014">
    <property type="entry name" value="HisA"/>
    <property type="match status" value="1"/>
</dbReference>
<dbReference type="InterPro" id="IPR013785">
    <property type="entry name" value="Aldolase_TIM"/>
</dbReference>
<dbReference type="InterPro" id="IPR006062">
    <property type="entry name" value="His_biosynth"/>
</dbReference>
<dbReference type="InterPro" id="IPR006063">
    <property type="entry name" value="HisA_bact_arch"/>
</dbReference>
<dbReference type="InterPro" id="IPR044524">
    <property type="entry name" value="Isoase_HisA-like"/>
</dbReference>
<dbReference type="InterPro" id="IPR023016">
    <property type="entry name" value="Isoase_HisA-like_bact"/>
</dbReference>
<dbReference type="InterPro" id="IPR011060">
    <property type="entry name" value="RibuloseP-bd_barrel"/>
</dbReference>
<dbReference type="NCBIfam" id="TIGR00007">
    <property type="entry name" value="1-(5-phosphoribosyl)-5-[(5-phosphoribosylamino)methylideneamino]imidazole-4-carboxamide isomerase"/>
    <property type="match status" value="1"/>
</dbReference>
<dbReference type="NCBIfam" id="NF010114">
    <property type="entry name" value="PRK13587.1"/>
    <property type="match status" value="1"/>
</dbReference>
<dbReference type="PANTHER" id="PTHR43090">
    <property type="entry name" value="1-(5-PHOSPHORIBOSYL)-5-[(5-PHOSPHORIBOSYLAMINO)METHYLIDENEAMINO] IMIDAZOLE-4-CARBOXAMIDE ISOMERASE"/>
    <property type="match status" value="1"/>
</dbReference>
<dbReference type="PANTHER" id="PTHR43090:SF2">
    <property type="entry name" value="1-(5-PHOSPHORIBOSYL)-5-[(5-PHOSPHORIBOSYLAMINO)METHYLIDENEAMINO] IMIDAZOLE-4-CARBOXAMIDE ISOMERASE"/>
    <property type="match status" value="1"/>
</dbReference>
<dbReference type="Pfam" id="PF00977">
    <property type="entry name" value="His_biosynth"/>
    <property type="match status" value="1"/>
</dbReference>
<dbReference type="SUPFAM" id="SSF51366">
    <property type="entry name" value="Ribulose-phoshate binding barrel"/>
    <property type="match status" value="1"/>
</dbReference>
<comment type="catalytic activity">
    <reaction evidence="1">
        <text>1-(5-phospho-beta-D-ribosyl)-5-[(5-phospho-beta-D-ribosylamino)methylideneamino]imidazole-4-carboxamide = 5-[(5-phospho-1-deoxy-D-ribulos-1-ylimino)methylamino]-1-(5-phospho-beta-D-ribosyl)imidazole-4-carboxamide</text>
        <dbReference type="Rhea" id="RHEA:15469"/>
        <dbReference type="ChEBI" id="CHEBI:58435"/>
        <dbReference type="ChEBI" id="CHEBI:58525"/>
        <dbReference type="EC" id="5.3.1.16"/>
    </reaction>
</comment>
<comment type="pathway">
    <text evidence="1">Amino-acid biosynthesis; L-histidine biosynthesis; L-histidine from 5-phospho-alpha-D-ribose 1-diphosphate: step 4/9.</text>
</comment>
<comment type="subcellular location">
    <subcellularLocation>
        <location evidence="1">Cytoplasm</location>
    </subcellularLocation>
</comment>
<comment type="similarity">
    <text evidence="1">Belongs to the HisA/HisF family.</text>
</comment>
<protein>
    <recommendedName>
        <fullName evidence="1">1-(5-phosphoribosyl)-5-[(5-phosphoribosylamino)methylideneamino] imidazole-4-carboxamide isomerase</fullName>
        <ecNumber evidence="1">5.3.1.16</ecNumber>
    </recommendedName>
    <alternativeName>
        <fullName evidence="1">Phosphoribosylformimino-5-aminoimidazole carboxamide ribotide isomerase</fullName>
    </alternativeName>
</protein>
<evidence type="ECO:0000255" key="1">
    <source>
        <dbReference type="HAMAP-Rule" id="MF_01014"/>
    </source>
</evidence>
<reference key="1">
    <citation type="submission" date="2007-05" db="EMBL/GenBank/DDBJ databases">
        <title>Complete sequence of chromosome of Staphylococcus aureus subsp. aureus JH9.</title>
        <authorList>
            <consortium name="US DOE Joint Genome Institute"/>
            <person name="Copeland A."/>
            <person name="Lucas S."/>
            <person name="Lapidus A."/>
            <person name="Barry K."/>
            <person name="Detter J.C."/>
            <person name="Glavina del Rio T."/>
            <person name="Hammon N."/>
            <person name="Israni S."/>
            <person name="Pitluck S."/>
            <person name="Chain P."/>
            <person name="Malfatti S."/>
            <person name="Shin M."/>
            <person name="Vergez L."/>
            <person name="Schmutz J."/>
            <person name="Larimer F."/>
            <person name="Land M."/>
            <person name="Hauser L."/>
            <person name="Kyrpides N."/>
            <person name="Kim E."/>
            <person name="Tomasz A."/>
            <person name="Richardson P."/>
        </authorList>
    </citation>
    <scope>NUCLEOTIDE SEQUENCE [LARGE SCALE GENOMIC DNA]</scope>
    <source>
        <strain>JH9</strain>
    </source>
</reference>
<sequence length="234" mass="26090">MIELWPAIDLIGSTSVRLTEGKYDSEEKMSRSAEESIAYYSQFECVNRIHIVDLIGAKAQYAREFDYIKSLRRLTTKDIEVGGGIRTKSQIMDYFAAGINYCIVGTKGIQDTDWLKEMAHTFPGRIYLSVDAYGEDIKVNGWEEDTELNLFSFVRQLSDIPLGGIIYTDIAKDGKMSGPNFELTGQLVKATTIPVIASGGIRHQQDIQRLASLNVHAAIIGKAAHQASFWEGLE</sequence>
<feature type="chain" id="PRO_1000084118" description="1-(5-phosphoribosyl)-5-[(5-phosphoribosylamino)methylideneamino] imidazole-4-carboxamide isomerase">
    <location>
        <begin position="1"/>
        <end position="234"/>
    </location>
</feature>
<feature type="active site" description="Proton acceptor" evidence="1">
    <location>
        <position position="9"/>
    </location>
</feature>
<feature type="active site" description="Proton donor" evidence="1">
    <location>
        <position position="131"/>
    </location>
</feature>
<proteinExistence type="inferred from homology"/>
<accession>A5IWA1</accession>